<keyword id="KW-1185">Reference proteome</keyword>
<dbReference type="EMBL" id="AE000782">
    <property type="protein sequence ID" value="AAB90682.1"/>
    <property type="molecule type" value="Genomic_DNA"/>
</dbReference>
<dbReference type="PIR" id="H69318">
    <property type="entry name" value="H69318"/>
</dbReference>
<dbReference type="RefSeq" id="WP_010878059.1">
    <property type="nucleotide sequence ID" value="NC_000917.1"/>
</dbReference>
<dbReference type="SMR" id="O29699"/>
<dbReference type="STRING" id="224325.AF_0552"/>
<dbReference type="PaxDb" id="224325-AF_0552"/>
<dbReference type="EnsemblBacteria" id="AAB90682">
    <property type="protein sequence ID" value="AAB90682"/>
    <property type="gene ID" value="AF_0552"/>
</dbReference>
<dbReference type="GeneID" id="1483768"/>
<dbReference type="KEGG" id="afu:AF_0552"/>
<dbReference type="eggNOG" id="arCOG00536">
    <property type="taxonomic scope" value="Archaea"/>
</dbReference>
<dbReference type="HOGENOM" id="CLU_114601_1_0_2"/>
<dbReference type="OrthoDB" id="98357at2157"/>
<dbReference type="PhylomeDB" id="O29699"/>
<dbReference type="Proteomes" id="UP000002199">
    <property type="component" value="Chromosome"/>
</dbReference>
<dbReference type="Gene3D" id="3.10.20.30">
    <property type="match status" value="1"/>
</dbReference>
<dbReference type="InterPro" id="IPR012675">
    <property type="entry name" value="Beta-grasp_dom_sf"/>
</dbReference>
<dbReference type="InterPro" id="IPR010038">
    <property type="entry name" value="MoaD_arc-typ"/>
</dbReference>
<dbReference type="InterPro" id="IPR016155">
    <property type="entry name" value="Mopterin_synth/thiamin_S_b"/>
</dbReference>
<dbReference type="InterPro" id="IPR052045">
    <property type="entry name" value="Sulfur_Carrier/Prot_Modifier"/>
</dbReference>
<dbReference type="InterPro" id="IPR003749">
    <property type="entry name" value="ThiS/MoaD-like"/>
</dbReference>
<dbReference type="NCBIfam" id="TIGR01687">
    <property type="entry name" value="moaD_arch"/>
    <property type="match status" value="1"/>
</dbReference>
<dbReference type="PANTHER" id="PTHR38031:SF1">
    <property type="entry name" value="SULFUR CARRIER PROTEIN CYSO"/>
    <property type="match status" value="1"/>
</dbReference>
<dbReference type="PANTHER" id="PTHR38031">
    <property type="entry name" value="SULFUR CARRIER PROTEIN SLR0821-RELATED"/>
    <property type="match status" value="1"/>
</dbReference>
<dbReference type="Pfam" id="PF02597">
    <property type="entry name" value="ThiS"/>
    <property type="match status" value="1"/>
</dbReference>
<dbReference type="SUPFAM" id="SSF54285">
    <property type="entry name" value="MoaD/ThiS"/>
    <property type="match status" value="1"/>
</dbReference>
<organism>
    <name type="scientific">Archaeoglobus fulgidus (strain ATCC 49558 / DSM 4304 / JCM 9628 / NBRC 100126 / VC-16)</name>
    <dbReference type="NCBI Taxonomy" id="224325"/>
    <lineage>
        <taxon>Archaea</taxon>
        <taxon>Methanobacteriati</taxon>
        <taxon>Methanobacteriota</taxon>
        <taxon>Archaeoglobi</taxon>
        <taxon>Archaeoglobales</taxon>
        <taxon>Archaeoglobaceae</taxon>
        <taxon>Archaeoglobus</taxon>
    </lineage>
</organism>
<protein>
    <recommendedName>
        <fullName>Putative sulfur carrier protein AF_0552</fullName>
    </recommendedName>
</protein>
<comment type="similarity">
    <text evidence="1">Belongs to the sulfur carrier protein CysO family.</text>
</comment>
<name>Y552_ARCFU</name>
<accession>O29699</accession>
<sequence>MAIKVRLPASINQGDLEIDAEKLTVNQLIALLSQITGKDLEKILKRDGELSPFISIFVNGRNVRYAEGLETEVRSGDEVSIVPTVAGG</sequence>
<proteinExistence type="inferred from homology"/>
<evidence type="ECO:0000305" key="1"/>
<feature type="chain" id="PRO_0000159085" description="Putative sulfur carrier protein AF_0552">
    <location>
        <begin position="1"/>
        <end position="88"/>
    </location>
</feature>
<reference key="1">
    <citation type="journal article" date="1997" name="Nature">
        <title>The complete genome sequence of the hyperthermophilic, sulphate-reducing archaeon Archaeoglobus fulgidus.</title>
        <authorList>
            <person name="Klenk H.-P."/>
            <person name="Clayton R.A."/>
            <person name="Tomb J.-F."/>
            <person name="White O."/>
            <person name="Nelson K.E."/>
            <person name="Ketchum K.A."/>
            <person name="Dodson R.J."/>
            <person name="Gwinn M.L."/>
            <person name="Hickey E.K."/>
            <person name="Peterson J.D."/>
            <person name="Richardson D.L."/>
            <person name="Kerlavage A.R."/>
            <person name="Graham D.E."/>
            <person name="Kyrpides N.C."/>
            <person name="Fleischmann R.D."/>
            <person name="Quackenbush J."/>
            <person name="Lee N.H."/>
            <person name="Sutton G.G."/>
            <person name="Gill S.R."/>
            <person name="Kirkness E.F."/>
            <person name="Dougherty B.A."/>
            <person name="McKenney K."/>
            <person name="Adams M.D."/>
            <person name="Loftus B.J."/>
            <person name="Peterson S.N."/>
            <person name="Reich C.I."/>
            <person name="McNeil L.K."/>
            <person name="Badger J.H."/>
            <person name="Glodek A."/>
            <person name="Zhou L."/>
            <person name="Overbeek R."/>
            <person name="Gocayne J.D."/>
            <person name="Weidman J.F."/>
            <person name="McDonald L.A."/>
            <person name="Utterback T.R."/>
            <person name="Cotton M.D."/>
            <person name="Spriggs T."/>
            <person name="Artiach P."/>
            <person name="Kaine B.P."/>
            <person name="Sykes S.M."/>
            <person name="Sadow P.W."/>
            <person name="D'Andrea K.P."/>
            <person name="Bowman C."/>
            <person name="Fujii C."/>
            <person name="Garland S.A."/>
            <person name="Mason T.M."/>
            <person name="Olsen G.J."/>
            <person name="Fraser C.M."/>
            <person name="Smith H.O."/>
            <person name="Woese C.R."/>
            <person name="Venter J.C."/>
        </authorList>
    </citation>
    <scope>NUCLEOTIDE SEQUENCE [LARGE SCALE GENOMIC DNA]</scope>
    <source>
        <strain>ATCC 49558 / DSM 4304 / JCM 9628 / NBRC 100126 / VC-16</strain>
    </source>
</reference>
<gene>
    <name type="ordered locus">AF_0552</name>
</gene>